<dbReference type="EMBL" id="CR382134">
    <property type="protein sequence ID" value="CAG85349.2"/>
    <property type="molecule type" value="Genomic_DNA"/>
</dbReference>
<dbReference type="RefSeq" id="XP_457345.2">
    <property type="nucleotide sequence ID" value="XM_457345.1"/>
</dbReference>
<dbReference type="FunCoup" id="Q6BWS4">
    <property type="interactions" value="301"/>
</dbReference>
<dbReference type="STRING" id="284592.Q6BWS4"/>
<dbReference type="GeneID" id="2913271"/>
<dbReference type="KEGG" id="dha:DEHA2B08954g"/>
<dbReference type="VEuPathDB" id="FungiDB:DEHA2B08954g"/>
<dbReference type="eggNOG" id="ENOG502S5DP">
    <property type="taxonomic scope" value="Eukaryota"/>
</dbReference>
<dbReference type="HOGENOM" id="CLU_119118_0_0_1"/>
<dbReference type="InParanoid" id="Q6BWS4"/>
<dbReference type="OMA" id="DAHNNNK"/>
<dbReference type="OrthoDB" id="69550at2759"/>
<dbReference type="Proteomes" id="UP000000599">
    <property type="component" value="Chromosome B"/>
</dbReference>
<dbReference type="GO" id="GO:0005730">
    <property type="term" value="C:nucleolus"/>
    <property type="evidence" value="ECO:0007669"/>
    <property type="project" value="UniProtKB-SubCell"/>
</dbReference>
<dbReference type="GO" id="GO:0030687">
    <property type="term" value="C:preribosome, large subunit precursor"/>
    <property type="evidence" value="ECO:0007669"/>
    <property type="project" value="TreeGrafter"/>
</dbReference>
<dbReference type="GO" id="GO:0000027">
    <property type="term" value="P:ribosomal large subunit assembly"/>
    <property type="evidence" value="ECO:0007669"/>
    <property type="project" value="TreeGrafter"/>
</dbReference>
<dbReference type="InterPro" id="IPR051898">
    <property type="entry name" value="Ribosome_Assembly_3"/>
</dbReference>
<dbReference type="InterPro" id="IPR028217">
    <property type="entry name" value="Rsa3_C"/>
</dbReference>
<dbReference type="PANTHER" id="PTHR28127">
    <property type="entry name" value="RIBOSOME ASSEMBLY PROTEIN 3"/>
    <property type="match status" value="1"/>
</dbReference>
<dbReference type="PANTHER" id="PTHR28127:SF1">
    <property type="entry name" value="RIBOSOME ASSEMBLY PROTEIN 3"/>
    <property type="match status" value="1"/>
</dbReference>
<dbReference type="Pfam" id="PF14615">
    <property type="entry name" value="Rsa3"/>
    <property type="match status" value="1"/>
</dbReference>
<proteinExistence type="inferred from homology"/>
<evidence type="ECO:0000250" key="1"/>
<evidence type="ECO:0000256" key="2">
    <source>
        <dbReference type="SAM" id="MobiDB-lite"/>
    </source>
</evidence>
<evidence type="ECO:0000305" key="3"/>
<gene>
    <name type="primary">RSA3</name>
    <name type="ordered locus">DEHA2B08954g</name>
</gene>
<organism>
    <name type="scientific">Debaryomyces hansenii (strain ATCC 36239 / CBS 767 / BCRC 21394 / JCM 1990 / NBRC 0083 / IGC 2968)</name>
    <name type="common">Yeast</name>
    <name type="synonym">Torulaspora hansenii</name>
    <dbReference type="NCBI Taxonomy" id="284592"/>
    <lineage>
        <taxon>Eukaryota</taxon>
        <taxon>Fungi</taxon>
        <taxon>Dikarya</taxon>
        <taxon>Ascomycota</taxon>
        <taxon>Saccharomycotina</taxon>
        <taxon>Pichiomycetes</taxon>
        <taxon>Debaryomycetaceae</taxon>
        <taxon>Debaryomyces</taxon>
    </lineage>
</organism>
<accession>Q6BWS4</accession>
<protein>
    <recommendedName>
        <fullName>Ribosome assembly protein 3</fullName>
    </recommendedName>
</protein>
<keyword id="KW-0539">Nucleus</keyword>
<keyword id="KW-1185">Reference proteome</keyword>
<keyword id="KW-0687">Ribonucleoprotein</keyword>
<keyword id="KW-0690">Ribosome biogenesis</keyword>
<feature type="chain" id="PRO_0000097464" description="Ribosome assembly protein 3">
    <location>
        <begin position="1"/>
        <end position="191"/>
    </location>
</feature>
<feature type="region of interest" description="Disordered" evidence="2">
    <location>
        <begin position="1"/>
        <end position="101"/>
    </location>
</feature>
<feature type="compositionally biased region" description="Low complexity" evidence="2">
    <location>
        <begin position="32"/>
        <end position="42"/>
    </location>
</feature>
<feature type="compositionally biased region" description="Basic and acidic residues" evidence="2">
    <location>
        <begin position="50"/>
        <end position="59"/>
    </location>
</feature>
<feature type="compositionally biased region" description="Polar residues" evidence="2">
    <location>
        <begin position="76"/>
        <end position="85"/>
    </location>
</feature>
<sequence length="191" mass="21376">MAAAQVKNEKIGNPKSNRRRRKKRRTEDFSSDSESSSSSSSDESMDDAAEEPKPIKETKSINIDDIDIDSDKETDVNSQEKQNSLRPEPLSNETHEKLSNIKLTTSKLTSVGGSSKNSNIDINQVKKTLAKDKDQLNNEYLMLMASSFSNDLDELRKKPDFTDKSLVLLAKTLQSGSNMFDEETLNAILEQ</sequence>
<comment type="function">
    <text evidence="1">Required for efficient biogenesis of the 60S ribosomal subunit.</text>
</comment>
<comment type="subunit">
    <text evidence="1">Associates with nucleolar pre-ribosomal particles.</text>
</comment>
<comment type="subcellular location">
    <subcellularLocation>
        <location evidence="1">Nucleus</location>
        <location evidence="1">Nucleolus</location>
    </subcellularLocation>
</comment>
<comment type="similarity">
    <text evidence="3">Belongs to the RSA3 family.</text>
</comment>
<name>RSA3_DEBHA</name>
<reference key="1">
    <citation type="journal article" date="2004" name="Nature">
        <title>Genome evolution in yeasts.</title>
        <authorList>
            <person name="Dujon B."/>
            <person name="Sherman D."/>
            <person name="Fischer G."/>
            <person name="Durrens P."/>
            <person name="Casaregola S."/>
            <person name="Lafontaine I."/>
            <person name="de Montigny J."/>
            <person name="Marck C."/>
            <person name="Neuveglise C."/>
            <person name="Talla E."/>
            <person name="Goffard N."/>
            <person name="Frangeul L."/>
            <person name="Aigle M."/>
            <person name="Anthouard V."/>
            <person name="Babour A."/>
            <person name="Barbe V."/>
            <person name="Barnay S."/>
            <person name="Blanchin S."/>
            <person name="Beckerich J.-M."/>
            <person name="Beyne E."/>
            <person name="Bleykasten C."/>
            <person name="Boisrame A."/>
            <person name="Boyer J."/>
            <person name="Cattolico L."/>
            <person name="Confanioleri F."/>
            <person name="de Daruvar A."/>
            <person name="Despons L."/>
            <person name="Fabre E."/>
            <person name="Fairhead C."/>
            <person name="Ferry-Dumazet H."/>
            <person name="Groppi A."/>
            <person name="Hantraye F."/>
            <person name="Hennequin C."/>
            <person name="Jauniaux N."/>
            <person name="Joyet P."/>
            <person name="Kachouri R."/>
            <person name="Kerrest A."/>
            <person name="Koszul R."/>
            <person name="Lemaire M."/>
            <person name="Lesur I."/>
            <person name="Ma L."/>
            <person name="Muller H."/>
            <person name="Nicaud J.-M."/>
            <person name="Nikolski M."/>
            <person name="Oztas S."/>
            <person name="Ozier-Kalogeropoulos O."/>
            <person name="Pellenz S."/>
            <person name="Potier S."/>
            <person name="Richard G.-F."/>
            <person name="Straub M.-L."/>
            <person name="Suleau A."/>
            <person name="Swennen D."/>
            <person name="Tekaia F."/>
            <person name="Wesolowski-Louvel M."/>
            <person name="Westhof E."/>
            <person name="Wirth B."/>
            <person name="Zeniou-Meyer M."/>
            <person name="Zivanovic Y."/>
            <person name="Bolotin-Fukuhara M."/>
            <person name="Thierry A."/>
            <person name="Bouchier C."/>
            <person name="Caudron B."/>
            <person name="Scarpelli C."/>
            <person name="Gaillardin C."/>
            <person name="Weissenbach J."/>
            <person name="Wincker P."/>
            <person name="Souciet J.-L."/>
        </authorList>
    </citation>
    <scope>NUCLEOTIDE SEQUENCE [LARGE SCALE GENOMIC DNA]</scope>
    <source>
        <strain>ATCC 36239 / CBS 767 / BCRC 21394 / JCM 1990 / NBRC 0083 / IGC 2968</strain>
    </source>
</reference>